<accession>A2C4Y8</accession>
<reference key="1">
    <citation type="journal article" date="2007" name="PLoS Genet.">
        <title>Patterns and implications of gene gain and loss in the evolution of Prochlorococcus.</title>
        <authorList>
            <person name="Kettler G.C."/>
            <person name="Martiny A.C."/>
            <person name="Huang K."/>
            <person name="Zucker J."/>
            <person name="Coleman M.L."/>
            <person name="Rodrigue S."/>
            <person name="Chen F."/>
            <person name="Lapidus A."/>
            <person name="Ferriera S."/>
            <person name="Johnson J."/>
            <person name="Steglich C."/>
            <person name="Church G.M."/>
            <person name="Richardson P."/>
            <person name="Chisholm S.W."/>
        </authorList>
    </citation>
    <scope>NUCLEOTIDE SEQUENCE [LARGE SCALE GENOMIC DNA]</scope>
    <source>
        <strain>NATL1A</strain>
    </source>
</reference>
<dbReference type="EMBL" id="CP000553">
    <property type="protein sequence ID" value="ABM76548.1"/>
    <property type="molecule type" value="Genomic_DNA"/>
</dbReference>
<dbReference type="SMR" id="A2C4Y8"/>
<dbReference type="KEGG" id="pme:NATL1_19921"/>
<dbReference type="eggNOG" id="COG0198">
    <property type="taxonomic scope" value="Bacteria"/>
</dbReference>
<dbReference type="HOGENOM" id="CLU_093315_2_3_3"/>
<dbReference type="Proteomes" id="UP000002592">
    <property type="component" value="Chromosome"/>
</dbReference>
<dbReference type="GO" id="GO:1990904">
    <property type="term" value="C:ribonucleoprotein complex"/>
    <property type="evidence" value="ECO:0007669"/>
    <property type="project" value="UniProtKB-KW"/>
</dbReference>
<dbReference type="GO" id="GO:0005840">
    <property type="term" value="C:ribosome"/>
    <property type="evidence" value="ECO:0007669"/>
    <property type="project" value="UniProtKB-KW"/>
</dbReference>
<dbReference type="GO" id="GO:0019843">
    <property type="term" value="F:rRNA binding"/>
    <property type="evidence" value="ECO:0007669"/>
    <property type="project" value="UniProtKB-UniRule"/>
</dbReference>
<dbReference type="GO" id="GO:0003735">
    <property type="term" value="F:structural constituent of ribosome"/>
    <property type="evidence" value="ECO:0007669"/>
    <property type="project" value="InterPro"/>
</dbReference>
<dbReference type="GO" id="GO:0006412">
    <property type="term" value="P:translation"/>
    <property type="evidence" value="ECO:0007669"/>
    <property type="project" value="UniProtKB-UniRule"/>
</dbReference>
<dbReference type="CDD" id="cd06089">
    <property type="entry name" value="KOW_RPL26"/>
    <property type="match status" value="1"/>
</dbReference>
<dbReference type="Gene3D" id="2.30.30.30">
    <property type="match status" value="1"/>
</dbReference>
<dbReference type="HAMAP" id="MF_01326_B">
    <property type="entry name" value="Ribosomal_uL24_B"/>
    <property type="match status" value="1"/>
</dbReference>
<dbReference type="InterPro" id="IPR005824">
    <property type="entry name" value="KOW"/>
</dbReference>
<dbReference type="InterPro" id="IPR014722">
    <property type="entry name" value="Rib_uL2_dom2"/>
</dbReference>
<dbReference type="InterPro" id="IPR003256">
    <property type="entry name" value="Ribosomal_uL24"/>
</dbReference>
<dbReference type="InterPro" id="IPR005825">
    <property type="entry name" value="Ribosomal_uL24_CS"/>
</dbReference>
<dbReference type="InterPro" id="IPR041988">
    <property type="entry name" value="Ribosomal_uL24_KOW"/>
</dbReference>
<dbReference type="InterPro" id="IPR008991">
    <property type="entry name" value="Translation_prot_SH3-like_sf"/>
</dbReference>
<dbReference type="NCBIfam" id="TIGR01079">
    <property type="entry name" value="rplX_bact"/>
    <property type="match status" value="1"/>
</dbReference>
<dbReference type="PANTHER" id="PTHR12903">
    <property type="entry name" value="MITOCHONDRIAL RIBOSOMAL PROTEIN L24"/>
    <property type="match status" value="1"/>
</dbReference>
<dbReference type="Pfam" id="PF00467">
    <property type="entry name" value="KOW"/>
    <property type="match status" value="1"/>
</dbReference>
<dbReference type="Pfam" id="PF17136">
    <property type="entry name" value="ribosomal_L24"/>
    <property type="match status" value="1"/>
</dbReference>
<dbReference type="SMART" id="SM00739">
    <property type="entry name" value="KOW"/>
    <property type="match status" value="1"/>
</dbReference>
<dbReference type="SUPFAM" id="SSF50104">
    <property type="entry name" value="Translation proteins SH3-like domain"/>
    <property type="match status" value="1"/>
</dbReference>
<dbReference type="PROSITE" id="PS01108">
    <property type="entry name" value="RIBOSOMAL_L24"/>
    <property type="match status" value="1"/>
</dbReference>
<proteinExistence type="inferred from homology"/>
<feature type="chain" id="PRO_0000355711" description="Large ribosomal subunit protein uL24">
    <location>
        <begin position="1"/>
        <end position="118"/>
    </location>
</feature>
<name>RL24_PROM1</name>
<comment type="function">
    <text evidence="1">One of two assembly initiator proteins, it binds directly to the 5'-end of the 23S rRNA, where it nucleates assembly of the 50S subunit.</text>
</comment>
<comment type="function">
    <text evidence="1">One of the proteins that surrounds the polypeptide exit tunnel on the outside of the subunit.</text>
</comment>
<comment type="subunit">
    <text evidence="1">Part of the 50S ribosomal subunit.</text>
</comment>
<comment type="similarity">
    <text evidence="1">Belongs to the universal ribosomal protein uL24 family.</text>
</comment>
<gene>
    <name evidence="1" type="primary">rplX</name>
    <name evidence="1" type="synonym">rpl24</name>
    <name type="ordered locus">NATL1_19921</name>
</gene>
<keyword id="KW-0687">Ribonucleoprotein</keyword>
<keyword id="KW-0689">Ribosomal protein</keyword>
<keyword id="KW-0694">RNA-binding</keyword>
<keyword id="KW-0699">rRNA-binding</keyword>
<protein>
    <recommendedName>
        <fullName evidence="1">Large ribosomal subunit protein uL24</fullName>
    </recommendedName>
    <alternativeName>
        <fullName evidence="2">50S ribosomal protein L24</fullName>
    </alternativeName>
</protein>
<organism>
    <name type="scientific">Prochlorococcus marinus (strain NATL1A)</name>
    <dbReference type="NCBI Taxonomy" id="167555"/>
    <lineage>
        <taxon>Bacteria</taxon>
        <taxon>Bacillati</taxon>
        <taxon>Cyanobacteriota</taxon>
        <taxon>Cyanophyceae</taxon>
        <taxon>Synechococcales</taxon>
        <taxon>Prochlorococcaceae</taxon>
        <taxon>Prochlorococcus</taxon>
    </lineage>
</organism>
<sequence>MAAINKTKGSADRIKMKIRKGDTVQVISGKDKGKTGEVLKTLPYENRVLVQGINQRTKHVKPSQEGETGRIETKEFPLHASNVMIYSTKEKVASKVEIFVDKDGSKKRRLKKTGELID</sequence>
<evidence type="ECO:0000255" key="1">
    <source>
        <dbReference type="HAMAP-Rule" id="MF_01326"/>
    </source>
</evidence>
<evidence type="ECO:0000305" key="2"/>